<evidence type="ECO:0000255" key="1">
    <source>
        <dbReference type="HAMAP-Rule" id="MF_00041"/>
    </source>
</evidence>
<accession>Q65PC8</accession>
<accession>Q62ZR6</accession>
<dbReference type="EC" id="6.1.1.16" evidence="1"/>
<dbReference type="EMBL" id="AE017333">
    <property type="protein sequence ID" value="AAU39086.1"/>
    <property type="molecule type" value="Genomic_DNA"/>
</dbReference>
<dbReference type="EMBL" id="CP000002">
    <property type="protein sequence ID" value="AAU21742.1"/>
    <property type="molecule type" value="Genomic_DNA"/>
</dbReference>
<dbReference type="RefSeq" id="WP_011197476.1">
    <property type="nucleotide sequence ID" value="NC_006322.1"/>
</dbReference>
<dbReference type="SMR" id="Q65PC8"/>
<dbReference type="STRING" id="279010.BL03269"/>
<dbReference type="GeneID" id="92858924"/>
<dbReference type="KEGG" id="bld:BLi00112"/>
<dbReference type="KEGG" id="bli:BL03269"/>
<dbReference type="PATRIC" id="fig|279010.13.peg.102"/>
<dbReference type="eggNOG" id="COG0215">
    <property type="taxonomic scope" value="Bacteria"/>
</dbReference>
<dbReference type="HOGENOM" id="CLU_013528_0_1_9"/>
<dbReference type="Proteomes" id="UP000000606">
    <property type="component" value="Chromosome"/>
</dbReference>
<dbReference type="GO" id="GO:0005829">
    <property type="term" value="C:cytosol"/>
    <property type="evidence" value="ECO:0007669"/>
    <property type="project" value="TreeGrafter"/>
</dbReference>
<dbReference type="GO" id="GO:0005524">
    <property type="term" value="F:ATP binding"/>
    <property type="evidence" value="ECO:0007669"/>
    <property type="project" value="UniProtKB-UniRule"/>
</dbReference>
<dbReference type="GO" id="GO:0004817">
    <property type="term" value="F:cysteine-tRNA ligase activity"/>
    <property type="evidence" value="ECO:0007669"/>
    <property type="project" value="UniProtKB-UniRule"/>
</dbReference>
<dbReference type="GO" id="GO:0008270">
    <property type="term" value="F:zinc ion binding"/>
    <property type="evidence" value="ECO:0007669"/>
    <property type="project" value="UniProtKB-UniRule"/>
</dbReference>
<dbReference type="GO" id="GO:0006423">
    <property type="term" value="P:cysteinyl-tRNA aminoacylation"/>
    <property type="evidence" value="ECO:0007669"/>
    <property type="project" value="UniProtKB-UniRule"/>
</dbReference>
<dbReference type="CDD" id="cd00672">
    <property type="entry name" value="CysRS_core"/>
    <property type="match status" value="1"/>
</dbReference>
<dbReference type="FunFam" id="1.20.120.1910:FF:000002">
    <property type="entry name" value="Cysteine--tRNA ligase"/>
    <property type="match status" value="1"/>
</dbReference>
<dbReference type="FunFam" id="3.40.50.620:FF:000009">
    <property type="entry name" value="Cysteine--tRNA ligase"/>
    <property type="match status" value="1"/>
</dbReference>
<dbReference type="Gene3D" id="1.20.120.1910">
    <property type="entry name" value="Cysteine-tRNA ligase, C-terminal anti-codon recognition domain"/>
    <property type="match status" value="1"/>
</dbReference>
<dbReference type="Gene3D" id="3.40.50.620">
    <property type="entry name" value="HUPs"/>
    <property type="match status" value="1"/>
</dbReference>
<dbReference type="HAMAP" id="MF_00041">
    <property type="entry name" value="Cys_tRNA_synth"/>
    <property type="match status" value="1"/>
</dbReference>
<dbReference type="InterPro" id="IPR015803">
    <property type="entry name" value="Cys-tRNA-ligase"/>
</dbReference>
<dbReference type="InterPro" id="IPR015273">
    <property type="entry name" value="Cys-tRNA-synt_Ia_DALR"/>
</dbReference>
<dbReference type="InterPro" id="IPR024909">
    <property type="entry name" value="Cys-tRNA/MSH_ligase"/>
</dbReference>
<dbReference type="InterPro" id="IPR056411">
    <property type="entry name" value="CysS_C"/>
</dbReference>
<dbReference type="InterPro" id="IPR014729">
    <property type="entry name" value="Rossmann-like_a/b/a_fold"/>
</dbReference>
<dbReference type="InterPro" id="IPR032678">
    <property type="entry name" value="tRNA-synt_1_cat_dom"/>
</dbReference>
<dbReference type="InterPro" id="IPR009080">
    <property type="entry name" value="tRNAsynth_Ia_anticodon-bd"/>
</dbReference>
<dbReference type="NCBIfam" id="TIGR00435">
    <property type="entry name" value="cysS"/>
    <property type="match status" value="1"/>
</dbReference>
<dbReference type="PANTHER" id="PTHR10890:SF3">
    <property type="entry name" value="CYSTEINE--TRNA LIGASE, CYTOPLASMIC"/>
    <property type="match status" value="1"/>
</dbReference>
<dbReference type="PANTHER" id="PTHR10890">
    <property type="entry name" value="CYSTEINYL-TRNA SYNTHETASE"/>
    <property type="match status" value="1"/>
</dbReference>
<dbReference type="Pfam" id="PF23493">
    <property type="entry name" value="CysS_C"/>
    <property type="match status" value="1"/>
</dbReference>
<dbReference type="Pfam" id="PF09190">
    <property type="entry name" value="DALR_2"/>
    <property type="match status" value="1"/>
</dbReference>
<dbReference type="Pfam" id="PF01406">
    <property type="entry name" value="tRNA-synt_1e"/>
    <property type="match status" value="1"/>
</dbReference>
<dbReference type="PRINTS" id="PR00983">
    <property type="entry name" value="TRNASYNTHCYS"/>
</dbReference>
<dbReference type="SMART" id="SM00840">
    <property type="entry name" value="DALR_2"/>
    <property type="match status" value="1"/>
</dbReference>
<dbReference type="SUPFAM" id="SSF47323">
    <property type="entry name" value="Anticodon-binding domain of a subclass of class I aminoacyl-tRNA synthetases"/>
    <property type="match status" value="1"/>
</dbReference>
<dbReference type="SUPFAM" id="SSF52374">
    <property type="entry name" value="Nucleotidylyl transferase"/>
    <property type="match status" value="1"/>
</dbReference>
<comment type="catalytic activity">
    <reaction evidence="1">
        <text>tRNA(Cys) + L-cysteine + ATP = L-cysteinyl-tRNA(Cys) + AMP + diphosphate</text>
        <dbReference type="Rhea" id="RHEA:17773"/>
        <dbReference type="Rhea" id="RHEA-COMP:9661"/>
        <dbReference type="Rhea" id="RHEA-COMP:9679"/>
        <dbReference type="ChEBI" id="CHEBI:30616"/>
        <dbReference type="ChEBI" id="CHEBI:33019"/>
        <dbReference type="ChEBI" id="CHEBI:35235"/>
        <dbReference type="ChEBI" id="CHEBI:78442"/>
        <dbReference type="ChEBI" id="CHEBI:78517"/>
        <dbReference type="ChEBI" id="CHEBI:456215"/>
        <dbReference type="EC" id="6.1.1.16"/>
    </reaction>
</comment>
<comment type="cofactor">
    <cofactor evidence="1">
        <name>Zn(2+)</name>
        <dbReference type="ChEBI" id="CHEBI:29105"/>
    </cofactor>
    <text evidence="1">Binds 1 zinc ion per subunit.</text>
</comment>
<comment type="subunit">
    <text evidence="1">Monomer.</text>
</comment>
<comment type="subcellular location">
    <subcellularLocation>
        <location evidence="1">Cytoplasm</location>
    </subcellularLocation>
</comment>
<comment type="similarity">
    <text evidence="1">Belongs to the class-I aminoacyl-tRNA synthetase family.</text>
</comment>
<name>SYC_BACLD</name>
<feature type="chain" id="PRO_0000159350" description="Cysteine--tRNA ligase">
    <location>
        <begin position="1"/>
        <end position="467"/>
    </location>
</feature>
<feature type="short sequence motif" description="'HIGH' region">
    <location>
        <begin position="31"/>
        <end position="41"/>
    </location>
</feature>
<feature type="short sequence motif" description="'KMSKS' region">
    <location>
        <begin position="266"/>
        <end position="270"/>
    </location>
</feature>
<feature type="binding site" evidence="1">
    <location>
        <position position="29"/>
    </location>
    <ligand>
        <name>Zn(2+)</name>
        <dbReference type="ChEBI" id="CHEBI:29105"/>
    </ligand>
</feature>
<feature type="binding site" evidence="1">
    <location>
        <position position="209"/>
    </location>
    <ligand>
        <name>Zn(2+)</name>
        <dbReference type="ChEBI" id="CHEBI:29105"/>
    </ligand>
</feature>
<feature type="binding site" evidence="1">
    <location>
        <position position="234"/>
    </location>
    <ligand>
        <name>Zn(2+)</name>
        <dbReference type="ChEBI" id="CHEBI:29105"/>
    </ligand>
</feature>
<feature type="binding site" evidence="1">
    <location>
        <position position="238"/>
    </location>
    <ligand>
        <name>Zn(2+)</name>
        <dbReference type="ChEBI" id="CHEBI:29105"/>
    </ligand>
</feature>
<feature type="binding site" evidence="1">
    <location>
        <position position="269"/>
    </location>
    <ligand>
        <name>ATP</name>
        <dbReference type="ChEBI" id="CHEBI:30616"/>
    </ligand>
</feature>
<feature type="modified residue" description="Phosphoserine" evidence="1">
    <location>
        <position position="270"/>
    </location>
</feature>
<keyword id="KW-0030">Aminoacyl-tRNA synthetase</keyword>
<keyword id="KW-0067">ATP-binding</keyword>
<keyword id="KW-0963">Cytoplasm</keyword>
<keyword id="KW-0436">Ligase</keyword>
<keyword id="KW-0479">Metal-binding</keyword>
<keyword id="KW-0547">Nucleotide-binding</keyword>
<keyword id="KW-0597">Phosphoprotein</keyword>
<keyword id="KW-0648">Protein biosynthesis</keyword>
<keyword id="KW-1185">Reference proteome</keyword>
<keyword id="KW-0862">Zinc</keyword>
<protein>
    <recommendedName>
        <fullName evidence="1">Cysteine--tRNA ligase</fullName>
        <ecNumber evidence="1">6.1.1.16</ecNumber>
    </recommendedName>
    <alternativeName>
        <fullName evidence="1">Cysteinyl-tRNA synthetase</fullName>
        <shortName evidence="1">CysRS</shortName>
    </alternativeName>
</protein>
<gene>
    <name evidence="1" type="primary">cysS</name>
    <name type="ordered locus">BLi00112</name>
    <name type="ordered locus">BL03269</name>
</gene>
<organism>
    <name type="scientific">Bacillus licheniformis (strain ATCC 14580 / DSM 13 / JCM 2505 / CCUG 7422 / NBRC 12200 / NCIMB 9375 / NCTC 10341 / NRRL NRS-1264 / Gibson 46)</name>
    <dbReference type="NCBI Taxonomy" id="279010"/>
    <lineage>
        <taxon>Bacteria</taxon>
        <taxon>Bacillati</taxon>
        <taxon>Bacillota</taxon>
        <taxon>Bacilli</taxon>
        <taxon>Bacillales</taxon>
        <taxon>Bacillaceae</taxon>
        <taxon>Bacillus</taxon>
    </lineage>
</organism>
<sequence>MTLTLYNTLTRKKEPFVPLEEGKVKMYVCGPTVYNYIHIGNARPAIVFDTVRKYLEYKGYEVQYVSNFTDVDDKLIKAANELGEEVPVIAERFIKAYFEDVGSLGCTKADCHPRVTENMDEIIDFIQTLIDKGYAYEADGDVYYKTRSFEGYGKLSHQSVDELRSGARIQVGEKKEDALDFTLWKAAKDNEISWDSPWGKGRPGWHIECSAMARKYLGDSIDIHAGGQDLAFPHHENEIAQSEALTGKPFAKYWLHNGYINIDNEKMSKSLGNFVLVHDIIKEHDPQVLRFFMLSVHYRHPINYSVELLENTKNAFGRLKTAYSNLQHRLKSSTNLTEGDSEWLEKIEEQRKAFQTAMDDDFNTANAISVLFDLAKHANYYLQEKNTAEHVIQAFIQLFDEICSVLGFSLKEQELLDKDIEELIEKRNEARRNRDFATSDQIRDQLKSMNIILEDTPQGTRWKRGES</sequence>
<proteinExistence type="inferred from homology"/>
<reference key="1">
    <citation type="journal article" date="2004" name="J. Mol. Microbiol. Biotechnol.">
        <title>The complete genome sequence of Bacillus licheniformis DSM13, an organism with great industrial potential.</title>
        <authorList>
            <person name="Veith B."/>
            <person name="Herzberg C."/>
            <person name="Steckel S."/>
            <person name="Feesche J."/>
            <person name="Maurer K.H."/>
            <person name="Ehrenreich P."/>
            <person name="Baeumer S."/>
            <person name="Henne A."/>
            <person name="Liesegang H."/>
            <person name="Merkl R."/>
            <person name="Ehrenreich A."/>
            <person name="Gottschalk G."/>
        </authorList>
    </citation>
    <scope>NUCLEOTIDE SEQUENCE [LARGE SCALE GENOMIC DNA]</scope>
    <source>
        <strain>ATCC 14580 / DSM 13 / JCM 2505 / CCUG 7422 / NBRC 12200 / NCIMB 9375 / NCTC 10341 / NRRL NRS-1264 / Gibson 46</strain>
    </source>
</reference>
<reference key="2">
    <citation type="journal article" date="2004" name="Genome Biol.">
        <title>Complete genome sequence of the industrial bacterium Bacillus licheniformis and comparisons with closely related Bacillus species.</title>
        <authorList>
            <person name="Rey M.W."/>
            <person name="Ramaiya P."/>
            <person name="Nelson B.A."/>
            <person name="Brody-Karpin S.D."/>
            <person name="Zaretsky E.J."/>
            <person name="Tang M."/>
            <person name="Lopez de Leon A."/>
            <person name="Xiang H."/>
            <person name="Gusti V."/>
            <person name="Clausen I.G."/>
            <person name="Olsen P.B."/>
            <person name="Rasmussen M.D."/>
            <person name="Andersen J.T."/>
            <person name="Joergensen P.L."/>
            <person name="Larsen T.S."/>
            <person name="Sorokin A."/>
            <person name="Bolotin A."/>
            <person name="Lapidus A."/>
            <person name="Galleron N."/>
            <person name="Ehrlich S.D."/>
            <person name="Berka R.M."/>
        </authorList>
    </citation>
    <scope>NUCLEOTIDE SEQUENCE [LARGE SCALE GENOMIC DNA]</scope>
    <source>
        <strain>ATCC 14580 / DSM 13 / JCM 2505 / CCUG 7422 / NBRC 12200 / NCIMB 9375 / NCTC 10341 / NRRL NRS-1264 / Gibson 46</strain>
    </source>
</reference>